<accession>Q3JPG7</accession>
<organism>
    <name type="scientific">Burkholderia pseudomallei (strain 1710b)</name>
    <dbReference type="NCBI Taxonomy" id="320372"/>
    <lineage>
        <taxon>Bacteria</taxon>
        <taxon>Pseudomonadati</taxon>
        <taxon>Pseudomonadota</taxon>
        <taxon>Betaproteobacteria</taxon>
        <taxon>Burkholderiales</taxon>
        <taxon>Burkholderiaceae</taxon>
        <taxon>Burkholderia</taxon>
        <taxon>pseudomallei group</taxon>
    </lineage>
</organism>
<proteinExistence type="inferred from homology"/>
<name>APAH_BURP1</name>
<protein>
    <recommendedName>
        <fullName evidence="1">Bis(5'-nucleosyl)-tetraphosphatase, symmetrical</fullName>
        <ecNumber evidence="1">3.6.1.41</ecNumber>
    </recommendedName>
    <alternativeName>
        <fullName evidence="1">Ap4A hydrolase</fullName>
    </alternativeName>
    <alternativeName>
        <fullName evidence="1">Diadenosine 5',5'''-P1,P4-tetraphosphate pyrophosphohydrolase</fullName>
    </alternativeName>
    <alternativeName>
        <fullName evidence="1">Diadenosine tetraphosphatase</fullName>
    </alternativeName>
</protein>
<sequence length="282" mass="30610">MTNFSSSPPIAFGDLQGCHAAYRQLFDTLAPAADTPLWFAGDLVNRGPASLATLREIVALGERAIAVLGNHDLHLLAVAAGIRTLKPGDTIGEILDAPDADDLIEWVRHRPFAHFERGMLMVHAGLLPQWDAALALELADELQRALRAPNWRDTLRSLYGNDPNCWSPDLKHADRLRVAFNAFTRIRFCTPEGAMEFRANGGPAAAPAGYLPWFDAPGRKTADVTVVFGHWAALGLMLRENLVALDSGCVWGNRLSAVRLADDPAARVVTQVACERCGAADE</sequence>
<gene>
    <name evidence="1" type="primary">apaH</name>
    <name type="ordered locus">BURPS1710b_3164</name>
</gene>
<reference key="1">
    <citation type="journal article" date="2010" name="Genome Biol. Evol.">
        <title>Continuing evolution of Burkholderia mallei through genome reduction and large-scale rearrangements.</title>
        <authorList>
            <person name="Losada L."/>
            <person name="Ronning C.M."/>
            <person name="DeShazer D."/>
            <person name="Woods D."/>
            <person name="Fedorova N."/>
            <person name="Kim H.S."/>
            <person name="Shabalina S.A."/>
            <person name="Pearson T.R."/>
            <person name="Brinkac L."/>
            <person name="Tan P."/>
            <person name="Nandi T."/>
            <person name="Crabtree J."/>
            <person name="Badger J."/>
            <person name="Beckstrom-Sternberg S."/>
            <person name="Saqib M."/>
            <person name="Schutzer S.E."/>
            <person name="Keim P."/>
            <person name="Nierman W.C."/>
        </authorList>
    </citation>
    <scope>NUCLEOTIDE SEQUENCE [LARGE SCALE GENOMIC DNA]</scope>
    <source>
        <strain>1710b</strain>
    </source>
</reference>
<keyword id="KW-0378">Hydrolase</keyword>
<comment type="function">
    <text evidence="1">Hydrolyzes diadenosine 5',5'''-P1,P4-tetraphosphate to yield ADP.</text>
</comment>
<comment type="catalytic activity">
    <reaction evidence="1">
        <text>P(1),P(4)-bis(5'-adenosyl) tetraphosphate + H2O = 2 ADP + 2 H(+)</text>
        <dbReference type="Rhea" id="RHEA:24252"/>
        <dbReference type="ChEBI" id="CHEBI:15377"/>
        <dbReference type="ChEBI" id="CHEBI:15378"/>
        <dbReference type="ChEBI" id="CHEBI:58141"/>
        <dbReference type="ChEBI" id="CHEBI:456216"/>
        <dbReference type="EC" id="3.6.1.41"/>
    </reaction>
</comment>
<comment type="similarity">
    <text evidence="1">Belongs to the Ap4A hydrolase family.</text>
</comment>
<feature type="chain" id="PRO_1000012050" description="Bis(5'-nucleosyl)-tetraphosphatase, symmetrical">
    <location>
        <begin position="1"/>
        <end position="282"/>
    </location>
</feature>
<evidence type="ECO:0000255" key="1">
    <source>
        <dbReference type="HAMAP-Rule" id="MF_00199"/>
    </source>
</evidence>
<dbReference type="EC" id="3.6.1.41" evidence="1"/>
<dbReference type="EMBL" id="CP000124">
    <property type="protein sequence ID" value="ABA48648.1"/>
    <property type="molecule type" value="Genomic_DNA"/>
</dbReference>
<dbReference type="RefSeq" id="WP_004522249.1">
    <property type="nucleotide sequence ID" value="NC_007434.1"/>
</dbReference>
<dbReference type="SMR" id="Q3JPG7"/>
<dbReference type="EnsemblBacteria" id="ABA48648">
    <property type="protein sequence ID" value="ABA48648"/>
    <property type="gene ID" value="BURPS1710b_3164"/>
</dbReference>
<dbReference type="KEGG" id="bpm:BURPS1710b_3164"/>
<dbReference type="HOGENOM" id="CLU_056184_1_0_4"/>
<dbReference type="Proteomes" id="UP000002700">
    <property type="component" value="Chromosome I"/>
</dbReference>
<dbReference type="GO" id="GO:0008803">
    <property type="term" value="F:bis(5'-nucleosyl)-tetraphosphatase (symmetrical) activity"/>
    <property type="evidence" value="ECO:0007669"/>
    <property type="project" value="UniProtKB-UniRule"/>
</dbReference>
<dbReference type="CDD" id="cd07422">
    <property type="entry name" value="MPP_ApaH"/>
    <property type="match status" value="1"/>
</dbReference>
<dbReference type="Gene3D" id="3.60.21.10">
    <property type="match status" value="1"/>
</dbReference>
<dbReference type="HAMAP" id="MF_00199">
    <property type="entry name" value="ApaH"/>
    <property type="match status" value="1"/>
</dbReference>
<dbReference type="InterPro" id="IPR004617">
    <property type="entry name" value="ApaH"/>
</dbReference>
<dbReference type="InterPro" id="IPR004843">
    <property type="entry name" value="Calcineurin-like_PHP_ApaH"/>
</dbReference>
<dbReference type="InterPro" id="IPR029052">
    <property type="entry name" value="Metallo-depent_PP-like"/>
</dbReference>
<dbReference type="NCBIfam" id="TIGR00668">
    <property type="entry name" value="apaH"/>
    <property type="match status" value="1"/>
</dbReference>
<dbReference type="NCBIfam" id="NF001204">
    <property type="entry name" value="PRK00166.1"/>
    <property type="match status" value="1"/>
</dbReference>
<dbReference type="PANTHER" id="PTHR40942">
    <property type="match status" value="1"/>
</dbReference>
<dbReference type="PANTHER" id="PTHR40942:SF4">
    <property type="entry name" value="CYTOCHROME C5"/>
    <property type="match status" value="1"/>
</dbReference>
<dbReference type="Pfam" id="PF00149">
    <property type="entry name" value="Metallophos"/>
    <property type="match status" value="1"/>
</dbReference>
<dbReference type="PIRSF" id="PIRSF000903">
    <property type="entry name" value="B5n-ttraPtase_sm"/>
    <property type="match status" value="1"/>
</dbReference>
<dbReference type="SUPFAM" id="SSF56300">
    <property type="entry name" value="Metallo-dependent phosphatases"/>
    <property type="match status" value="1"/>
</dbReference>